<gene>
    <name evidence="1" type="primary">htpX</name>
    <name type="ordered locus">Plut_1059</name>
</gene>
<proteinExistence type="inferred from homology"/>
<protein>
    <recommendedName>
        <fullName evidence="1">Protease HtpX homolog</fullName>
        <ecNumber evidence="1">3.4.24.-</ecNumber>
    </recommendedName>
</protein>
<sequence>MKRVFLFLITNLAVILVLSFSARLLGVDRFLTSNGLDLGMLLAFAALIGFGGSFISLLMSKTMAKWSTGARVILRASNEDESWLLNTVRQLSKKADLAMPEVAIYEGAPNAFATGPSRSKSLVAVSSGLLRSMDRKQVEAVLAHEVAHIQNGDMVTLTLIQGVVNTFVIFLARVFAYALDSFLRRDEDESGSPGIGYWISSIAFEIVFGILASIVVMYFSRKREFRADAGAAALIGDRRPMIEALRALGSIDAGKLPKEMAASGIAGGGMMALFSSHPPLESRIAALESAR</sequence>
<keyword id="KW-0997">Cell inner membrane</keyword>
<keyword id="KW-1003">Cell membrane</keyword>
<keyword id="KW-0378">Hydrolase</keyword>
<keyword id="KW-0472">Membrane</keyword>
<keyword id="KW-0479">Metal-binding</keyword>
<keyword id="KW-0482">Metalloprotease</keyword>
<keyword id="KW-0645">Protease</keyword>
<keyword id="KW-1185">Reference proteome</keyword>
<keyword id="KW-0812">Transmembrane</keyword>
<keyword id="KW-1133">Transmembrane helix</keyword>
<keyword id="KW-0862">Zinc</keyword>
<evidence type="ECO:0000255" key="1">
    <source>
        <dbReference type="HAMAP-Rule" id="MF_00188"/>
    </source>
</evidence>
<reference key="1">
    <citation type="submission" date="2005-08" db="EMBL/GenBank/DDBJ databases">
        <title>Complete sequence of Pelodictyon luteolum DSM 273.</title>
        <authorList>
            <consortium name="US DOE Joint Genome Institute"/>
            <person name="Copeland A."/>
            <person name="Lucas S."/>
            <person name="Lapidus A."/>
            <person name="Barry K."/>
            <person name="Detter J.C."/>
            <person name="Glavina T."/>
            <person name="Hammon N."/>
            <person name="Israni S."/>
            <person name="Pitluck S."/>
            <person name="Bryant D."/>
            <person name="Schmutz J."/>
            <person name="Larimer F."/>
            <person name="Land M."/>
            <person name="Kyrpides N."/>
            <person name="Ivanova N."/>
            <person name="Richardson P."/>
        </authorList>
    </citation>
    <scope>NUCLEOTIDE SEQUENCE [LARGE SCALE GENOMIC DNA]</scope>
    <source>
        <strain>DSM 273 / BCRC 81028 / 2530</strain>
    </source>
</reference>
<organism>
    <name type="scientific">Chlorobium luteolum (strain DSM 273 / BCRC 81028 / 2530)</name>
    <name type="common">Pelodictyon luteolum</name>
    <dbReference type="NCBI Taxonomy" id="319225"/>
    <lineage>
        <taxon>Bacteria</taxon>
        <taxon>Pseudomonadati</taxon>
        <taxon>Chlorobiota</taxon>
        <taxon>Chlorobiia</taxon>
        <taxon>Chlorobiales</taxon>
        <taxon>Chlorobiaceae</taxon>
        <taxon>Chlorobium/Pelodictyon group</taxon>
        <taxon>Pelodictyon</taxon>
    </lineage>
</organism>
<dbReference type="EC" id="3.4.24.-" evidence="1"/>
<dbReference type="EMBL" id="CP000096">
    <property type="protein sequence ID" value="ABB23921.1"/>
    <property type="molecule type" value="Genomic_DNA"/>
</dbReference>
<dbReference type="RefSeq" id="WP_011357793.1">
    <property type="nucleotide sequence ID" value="NC_007512.1"/>
</dbReference>
<dbReference type="SMR" id="Q3B410"/>
<dbReference type="STRING" id="319225.Plut_1059"/>
<dbReference type="MEROPS" id="M48.002"/>
<dbReference type="KEGG" id="plt:Plut_1059"/>
<dbReference type="eggNOG" id="COG0501">
    <property type="taxonomic scope" value="Bacteria"/>
</dbReference>
<dbReference type="HOGENOM" id="CLU_042266_1_0_10"/>
<dbReference type="OrthoDB" id="9810445at2"/>
<dbReference type="Proteomes" id="UP000002709">
    <property type="component" value="Chromosome"/>
</dbReference>
<dbReference type="GO" id="GO:0005886">
    <property type="term" value="C:plasma membrane"/>
    <property type="evidence" value="ECO:0007669"/>
    <property type="project" value="UniProtKB-SubCell"/>
</dbReference>
<dbReference type="GO" id="GO:0004222">
    <property type="term" value="F:metalloendopeptidase activity"/>
    <property type="evidence" value="ECO:0007669"/>
    <property type="project" value="UniProtKB-UniRule"/>
</dbReference>
<dbReference type="GO" id="GO:0008270">
    <property type="term" value="F:zinc ion binding"/>
    <property type="evidence" value="ECO:0007669"/>
    <property type="project" value="UniProtKB-UniRule"/>
</dbReference>
<dbReference type="GO" id="GO:0006508">
    <property type="term" value="P:proteolysis"/>
    <property type="evidence" value="ECO:0007669"/>
    <property type="project" value="UniProtKB-KW"/>
</dbReference>
<dbReference type="CDD" id="cd07335">
    <property type="entry name" value="M48B_HtpX_like"/>
    <property type="match status" value="1"/>
</dbReference>
<dbReference type="Gene3D" id="3.30.2010.10">
    <property type="entry name" value="Metalloproteases ('zincins'), catalytic domain"/>
    <property type="match status" value="1"/>
</dbReference>
<dbReference type="HAMAP" id="MF_00188">
    <property type="entry name" value="Pept_M48_protease_HtpX"/>
    <property type="match status" value="1"/>
</dbReference>
<dbReference type="InterPro" id="IPR050083">
    <property type="entry name" value="HtpX_protease"/>
</dbReference>
<dbReference type="InterPro" id="IPR022919">
    <property type="entry name" value="Pept_M48_protease_HtpX"/>
</dbReference>
<dbReference type="InterPro" id="IPR001915">
    <property type="entry name" value="Peptidase_M48"/>
</dbReference>
<dbReference type="NCBIfam" id="NF003965">
    <property type="entry name" value="PRK05457.1"/>
    <property type="match status" value="1"/>
</dbReference>
<dbReference type="PANTHER" id="PTHR43221">
    <property type="entry name" value="PROTEASE HTPX"/>
    <property type="match status" value="1"/>
</dbReference>
<dbReference type="PANTHER" id="PTHR43221:SF1">
    <property type="entry name" value="PROTEASE HTPX"/>
    <property type="match status" value="1"/>
</dbReference>
<dbReference type="Pfam" id="PF01435">
    <property type="entry name" value="Peptidase_M48"/>
    <property type="match status" value="1"/>
</dbReference>
<dbReference type="PROSITE" id="PS00142">
    <property type="entry name" value="ZINC_PROTEASE"/>
    <property type="match status" value="1"/>
</dbReference>
<comment type="cofactor">
    <cofactor evidence="1">
        <name>Zn(2+)</name>
        <dbReference type="ChEBI" id="CHEBI:29105"/>
    </cofactor>
    <text evidence="1">Binds 1 zinc ion per subunit.</text>
</comment>
<comment type="subcellular location">
    <subcellularLocation>
        <location evidence="1">Cell inner membrane</location>
        <topology evidence="1">Multi-pass membrane protein</topology>
    </subcellularLocation>
</comment>
<comment type="similarity">
    <text evidence="1">Belongs to the peptidase M48B family.</text>
</comment>
<accession>Q3B410</accession>
<name>HTPX_CHLL3</name>
<feature type="chain" id="PRO_1000020907" description="Protease HtpX homolog">
    <location>
        <begin position="1"/>
        <end position="291"/>
    </location>
</feature>
<feature type="transmembrane region" description="Helical" evidence="1">
    <location>
        <begin position="4"/>
        <end position="24"/>
    </location>
</feature>
<feature type="transmembrane region" description="Helical" evidence="1">
    <location>
        <begin position="38"/>
        <end position="58"/>
    </location>
</feature>
<feature type="transmembrane region" description="Helical" evidence="1">
    <location>
        <begin position="159"/>
        <end position="179"/>
    </location>
</feature>
<feature type="transmembrane region" description="Helical" evidence="1">
    <location>
        <begin position="199"/>
        <end position="219"/>
    </location>
</feature>
<feature type="active site" evidence="1">
    <location>
        <position position="145"/>
    </location>
</feature>
<feature type="binding site" evidence="1">
    <location>
        <position position="144"/>
    </location>
    <ligand>
        <name>Zn(2+)</name>
        <dbReference type="ChEBI" id="CHEBI:29105"/>
        <note>catalytic</note>
    </ligand>
</feature>
<feature type="binding site" evidence="1">
    <location>
        <position position="148"/>
    </location>
    <ligand>
        <name>Zn(2+)</name>
        <dbReference type="ChEBI" id="CHEBI:29105"/>
        <note>catalytic</note>
    </ligand>
</feature>
<feature type="binding site" evidence="1">
    <location>
        <position position="224"/>
    </location>
    <ligand>
        <name>Zn(2+)</name>
        <dbReference type="ChEBI" id="CHEBI:29105"/>
        <note>catalytic</note>
    </ligand>
</feature>